<gene>
    <name evidence="2" type="primary">trhO</name>
    <name type="synonym">yceA</name>
    <name type="ordered locus">ECIAI1_1090</name>
</gene>
<comment type="function">
    <text evidence="1">Catalyzes oxygen-dependent 5-hydroxyuridine (ho5U) modification at position 34 in tRNAs, the first step in 5-carboxymethoxyuridine (cmo5U) biosynthesis. May be part of an alternate pathway, which is able to bypass cmo5U biogenesis in a subset of tRNAs under aerobic conditions.</text>
</comment>
<comment type="catalytic activity">
    <reaction evidence="2">
        <text>uridine(34) in tRNA + AH2 + O2 = 5-hydroxyuridine(34) in tRNA + A + H2O</text>
        <dbReference type="Rhea" id="RHEA:64224"/>
        <dbReference type="Rhea" id="RHEA-COMP:11727"/>
        <dbReference type="Rhea" id="RHEA-COMP:13381"/>
        <dbReference type="ChEBI" id="CHEBI:13193"/>
        <dbReference type="ChEBI" id="CHEBI:15377"/>
        <dbReference type="ChEBI" id="CHEBI:15379"/>
        <dbReference type="ChEBI" id="CHEBI:17499"/>
        <dbReference type="ChEBI" id="CHEBI:65315"/>
        <dbReference type="ChEBI" id="CHEBI:136877"/>
    </reaction>
</comment>
<comment type="similarity">
    <text evidence="2">Belongs to the TrhO family.</text>
</comment>
<proteinExistence type="inferred from homology"/>
<accession>B7M930</accession>
<protein>
    <recommendedName>
        <fullName evidence="2">tRNA uridine(34) hydroxylase</fullName>
        <ecNumber evidence="2">1.14.-.-</ecNumber>
    </recommendedName>
    <alternativeName>
        <fullName evidence="2">tRNA hydroxylation protein O</fullName>
    </alternativeName>
</protein>
<organism>
    <name type="scientific">Escherichia coli O8 (strain IAI1)</name>
    <dbReference type="NCBI Taxonomy" id="585034"/>
    <lineage>
        <taxon>Bacteria</taxon>
        <taxon>Pseudomonadati</taxon>
        <taxon>Pseudomonadota</taxon>
        <taxon>Gammaproteobacteria</taxon>
        <taxon>Enterobacterales</taxon>
        <taxon>Enterobacteriaceae</taxon>
        <taxon>Escherichia</taxon>
    </lineage>
</organism>
<feature type="chain" id="PRO_1000200360" description="tRNA uridine(34) hydroxylase">
    <location>
        <begin position="1"/>
        <end position="350"/>
    </location>
</feature>
<feature type="domain" description="Rhodanese" evidence="2">
    <location>
        <begin position="146"/>
        <end position="240"/>
    </location>
</feature>
<feature type="active site" description="Cysteine persulfide intermediate" evidence="2">
    <location>
        <position position="200"/>
    </location>
</feature>
<keyword id="KW-0560">Oxidoreductase</keyword>
<keyword id="KW-0819">tRNA processing</keyword>
<name>TRHO_ECO8A</name>
<evidence type="ECO:0000250" key="1">
    <source>
        <dbReference type="UniProtKB" id="P24188"/>
    </source>
</evidence>
<evidence type="ECO:0000255" key="2">
    <source>
        <dbReference type="HAMAP-Rule" id="MF_00469"/>
    </source>
</evidence>
<dbReference type="EC" id="1.14.-.-" evidence="2"/>
<dbReference type="EMBL" id="CU928160">
    <property type="protein sequence ID" value="CAQ97954.1"/>
    <property type="molecule type" value="Genomic_DNA"/>
</dbReference>
<dbReference type="RefSeq" id="WP_001144616.1">
    <property type="nucleotide sequence ID" value="NC_011741.1"/>
</dbReference>
<dbReference type="SMR" id="B7M930"/>
<dbReference type="KEGG" id="ecr:ECIAI1_1090"/>
<dbReference type="HOGENOM" id="CLU_038878_1_1_6"/>
<dbReference type="GO" id="GO:0016705">
    <property type="term" value="F:oxidoreductase activity, acting on paired donors, with incorporation or reduction of molecular oxygen"/>
    <property type="evidence" value="ECO:0007669"/>
    <property type="project" value="UniProtKB-UniRule"/>
</dbReference>
<dbReference type="GO" id="GO:0006400">
    <property type="term" value="P:tRNA modification"/>
    <property type="evidence" value="ECO:0007669"/>
    <property type="project" value="UniProtKB-UniRule"/>
</dbReference>
<dbReference type="CDD" id="cd01518">
    <property type="entry name" value="RHOD_YceA"/>
    <property type="match status" value="1"/>
</dbReference>
<dbReference type="Gene3D" id="3.30.70.100">
    <property type="match status" value="1"/>
</dbReference>
<dbReference type="Gene3D" id="3.40.250.10">
    <property type="entry name" value="Rhodanese-like domain"/>
    <property type="match status" value="1"/>
</dbReference>
<dbReference type="HAMAP" id="MF_00469">
    <property type="entry name" value="TrhO"/>
    <property type="match status" value="1"/>
</dbReference>
<dbReference type="InterPro" id="IPR001763">
    <property type="entry name" value="Rhodanese-like_dom"/>
</dbReference>
<dbReference type="InterPro" id="IPR036873">
    <property type="entry name" value="Rhodanese-like_dom_sf"/>
</dbReference>
<dbReference type="InterPro" id="IPR022111">
    <property type="entry name" value="Rhodanese_C"/>
</dbReference>
<dbReference type="InterPro" id="IPR020936">
    <property type="entry name" value="TrhO"/>
</dbReference>
<dbReference type="InterPro" id="IPR040503">
    <property type="entry name" value="TRHO_N"/>
</dbReference>
<dbReference type="NCBIfam" id="NF001133">
    <property type="entry name" value="PRK00142.1-1"/>
    <property type="match status" value="1"/>
</dbReference>
<dbReference type="PANTHER" id="PTHR43846:SF1">
    <property type="entry name" value="TRNA URIDINE(34) HYDROXYLASE"/>
    <property type="match status" value="1"/>
</dbReference>
<dbReference type="PANTHER" id="PTHR43846">
    <property type="entry name" value="UPF0176 PROTEIN YCEA"/>
    <property type="match status" value="1"/>
</dbReference>
<dbReference type="Pfam" id="PF00581">
    <property type="entry name" value="Rhodanese"/>
    <property type="match status" value="1"/>
</dbReference>
<dbReference type="Pfam" id="PF12368">
    <property type="entry name" value="Rhodanese_C"/>
    <property type="match status" value="1"/>
</dbReference>
<dbReference type="Pfam" id="PF17773">
    <property type="entry name" value="UPF0176_N"/>
    <property type="match status" value="1"/>
</dbReference>
<dbReference type="SMART" id="SM00450">
    <property type="entry name" value="RHOD"/>
    <property type="match status" value="1"/>
</dbReference>
<dbReference type="SUPFAM" id="SSF52821">
    <property type="entry name" value="Rhodanese/Cell cycle control phosphatase"/>
    <property type="match status" value="1"/>
</dbReference>
<dbReference type="PROSITE" id="PS50206">
    <property type="entry name" value="RHODANESE_3"/>
    <property type="match status" value="1"/>
</dbReference>
<reference key="1">
    <citation type="journal article" date="2009" name="PLoS Genet.">
        <title>Organised genome dynamics in the Escherichia coli species results in highly diverse adaptive paths.</title>
        <authorList>
            <person name="Touchon M."/>
            <person name="Hoede C."/>
            <person name="Tenaillon O."/>
            <person name="Barbe V."/>
            <person name="Baeriswyl S."/>
            <person name="Bidet P."/>
            <person name="Bingen E."/>
            <person name="Bonacorsi S."/>
            <person name="Bouchier C."/>
            <person name="Bouvet O."/>
            <person name="Calteau A."/>
            <person name="Chiapello H."/>
            <person name="Clermont O."/>
            <person name="Cruveiller S."/>
            <person name="Danchin A."/>
            <person name="Diard M."/>
            <person name="Dossat C."/>
            <person name="Karoui M.E."/>
            <person name="Frapy E."/>
            <person name="Garry L."/>
            <person name="Ghigo J.M."/>
            <person name="Gilles A.M."/>
            <person name="Johnson J."/>
            <person name="Le Bouguenec C."/>
            <person name="Lescat M."/>
            <person name="Mangenot S."/>
            <person name="Martinez-Jehanne V."/>
            <person name="Matic I."/>
            <person name="Nassif X."/>
            <person name="Oztas S."/>
            <person name="Petit M.A."/>
            <person name="Pichon C."/>
            <person name="Rouy Z."/>
            <person name="Ruf C.S."/>
            <person name="Schneider D."/>
            <person name="Tourret J."/>
            <person name="Vacherie B."/>
            <person name="Vallenet D."/>
            <person name="Medigue C."/>
            <person name="Rocha E.P.C."/>
            <person name="Denamur E."/>
        </authorList>
    </citation>
    <scope>NUCLEOTIDE SEQUENCE [LARGE SCALE GENOMIC DNA]</scope>
    <source>
        <strain>IAI1</strain>
    </source>
</reference>
<sequence>MPVLHNRISNDALKAKMLAESEPRTTISFYKYFHIADPKATRDALYQLFTALNVFGRVYLAHEGINAQISVPASNVETFRAQLYAFDPALEGLRLNIALDDDGKSFWVLRMKVRDRIVADGIDDPHFDASNVGEYLQAAEVNAMLDDPDALFIDMRNHYEYEVGHFENALEIPADTFREQLPKAVEMMQAHKDKKIVMYCTGGIRCEKASAWMKHNGFNKVWHIEGGIIEYARKAREQGLPVRFIGKNFVFDERMGERISDEIIAHCHQCGAPCDSHTNCKNDGCHLLFIQCPVCAEKYKGCCSEICCEESALPPEEQRRRRAGRENGNKIFNKSRGRLNTTLGIPDPTE</sequence>